<protein>
    <recommendedName>
        <fullName>Uncharacterized protein YqcB</fullName>
    </recommendedName>
</protein>
<organism>
    <name type="scientific">Bacillus subtilis (strain 168)</name>
    <dbReference type="NCBI Taxonomy" id="224308"/>
    <lineage>
        <taxon>Bacteria</taxon>
        <taxon>Bacillati</taxon>
        <taxon>Bacillota</taxon>
        <taxon>Bacilli</taxon>
        <taxon>Bacillales</taxon>
        <taxon>Bacillaceae</taxon>
        <taxon>Bacillus</taxon>
    </lineage>
</organism>
<accession>P45937</accession>
<feature type="chain" id="PRO_0000049772" description="Uncharacterized protein YqcB">
    <location>
        <begin position="1"/>
        <end position="90"/>
    </location>
</feature>
<reference key="1">
    <citation type="journal article" date="1995" name="Microbiology">
        <title>Complete nucleotide sequence of a skin element excised by DNA rearrangement during sporulation in Bacillus subtilis.</title>
        <authorList>
            <person name="Takemaru K."/>
            <person name="Mizuno M."/>
            <person name="Sato T."/>
            <person name="Takeuchi M."/>
            <person name="Kobayashi Y."/>
        </authorList>
    </citation>
    <scope>NUCLEOTIDE SEQUENCE [GENOMIC DNA]</scope>
    <source>
        <strain>168 / JH642</strain>
    </source>
</reference>
<reference key="2">
    <citation type="journal article" date="1996" name="Microbiology">
        <title>Systematic sequencing of the 283 kb 210 degrees-232 degrees region of the Bacillus subtilis genome containing the skin element and many sporulation genes.</title>
        <authorList>
            <person name="Mizuno M."/>
            <person name="Masuda S."/>
            <person name="Takemaru K."/>
            <person name="Hosono S."/>
            <person name="Sato T."/>
            <person name="Takeuchi M."/>
            <person name="Kobayashi Y."/>
        </authorList>
    </citation>
    <scope>NUCLEOTIDE SEQUENCE [GENOMIC DNA]</scope>
    <source>
        <strain>168 / JH642</strain>
    </source>
</reference>
<reference key="3">
    <citation type="journal article" date="1997" name="Nature">
        <title>The complete genome sequence of the Gram-positive bacterium Bacillus subtilis.</title>
        <authorList>
            <person name="Kunst F."/>
            <person name="Ogasawara N."/>
            <person name="Moszer I."/>
            <person name="Albertini A.M."/>
            <person name="Alloni G."/>
            <person name="Azevedo V."/>
            <person name="Bertero M.G."/>
            <person name="Bessieres P."/>
            <person name="Bolotin A."/>
            <person name="Borchert S."/>
            <person name="Borriss R."/>
            <person name="Boursier L."/>
            <person name="Brans A."/>
            <person name="Braun M."/>
            <person name="Brignell S.C."/>
            <person name="Bron S."/>
            <person name="Brouillet S."/>
            <person name="Bruschi C.V."/>
            <person name="Caldwell B."/>
            <person name="Capuano V."/>
            <person name="Carter N.M."/>
            <person name="Choi S.-K."/>
            <person name="Codani J.-J."/>
            <person name="Connerton I.F."/>
            <person name="Cummings N.J."/>
            <person name="Daniel R.A."/>
            <person name="Denizot F."/>
            <person name="Devine K.M."/>
            <person name="Duesterhoeft A."/>
            <person name="Ehrlich S.D."/>
            <person name="Emmerson P.T."/>
            <person name="Entian K.-D."/>
            <person name="Errington J."/>
            <person name="Fabret C."/>
            <person name="Ferrari E."/>
            <person name="Foulger D."/>
            <person name="Fritz C."/>
            <person name="Fujita M."/>
            <person name="Fujita Y."/>
            <person name="Fuma S."/>
            <person name="Galizzi A."/>
            <person name="Galleron N."/>
            <person name="Ghim S.-Y."/>
            <person name="Glaser P."/>
            <person name="Goffeau A."/>
            <person name="Golightly E.J."/>
            <person name="Grandi G."/>
            <person name="Guiseppi G."/>
            <person name="Guy B.J."/>
            <person name="Haga K."/>
            <person name="Haiech J."/>
            <person name="Harwood C.R."/>
            <person name="Henaut A."/>
            <person name="Hilbert H."/>
            <person name="Holsappel S."/>
            <person name="Hosono S."/>
            <person name="Hullo M.-F."/>
            <person name="Itaya M."/>
            <person name="Jones L.-M."/>
            <person name="Joris B."/>
            <person name="Karamata D."/>
            <person name="Kasahara Y."/>
            <person name="Klaerr-Blanchard M."/>
            <person name="Klein C."/>
            <person name="Kobayashi Y."/>
            <person name="Koetter P."/>
            <person name="Koningstein G."/>
            <person name="Krogh S."/>
            <person name="Kumano M."/>
            <person name="Kurita K."/>
            <person name="Lapidus A."/>
            <person name="Lardinois S."/>
            <person name="Lauber J."/>
            <person name="Lazarevic V."/>
            <person name="Lee S.-M."/>
            <person name="Levine A."/>
            <person name="Liu H."/>
            <person name="Masuda S."/>
            <person name="Mauel C."/>
            <person name="Medigue C."/>
            <person name="Medina N."/>
            <person name="Mellado R.P."/>
            <person name="Mizuno M."/>
            <person name="Moestl D."/>
            <person name="Nakai S."/>
            <person name="Noback M."/>
            <person name="Noone D."/>
            <person name="O'Reilly M."/>
            <person name="Ogawa K."/>
            <person name="Ogiwara A."/>
            <person name="Oudega B."/>
            <person name="Park S.-H."/>
            <person name="Parro V."/>
            <person name="Pohl T.M."/>
            <person name="Portetelle D."/>
            <person name="Porwollik S."/>
            <person name="Prescott A.M."/>
            <person name="Presecan E."/>
            <person name="Pujic P."/>
            <person name="Purnelle B."/>
            <person name="Rapoport G."/>
            <person name="Rey M."/>
            <person name="Reynolds S."/>
            <person name="Rieger M."/>
            <person name="Rivolta C."/>
            <person name="Rocha E."/>
            <person name="Roche B."/>
            <person name="Rose M."/>
            <person name="Sadaie Y."/>
            <person name="Sato T."/>
            <person name="Scanlan E."/>
            <person name="Schleich S."/>
            <person name="Schroeter R."/>
            <person name="Scoffone F."/>
            <person name="Sekiguchi J."/>
            <person name="Sekowska A."/>
            <person name="Seror S.J."/>
            <person name="Serror P."/>
            <person name="Shin B.-S."/>
            <person name="Soldo B."/>
            <person name="Sorokin A."/>
            <person name="Tacconi E."/>
            <person name="Takagi T."/>
            <person name="Takahashi H."/>
            <person name="Takemaru K."/>
            <person name="Takeuchi M."/>
            <person name="Tamakoshi A."/>
            <person name="Tanaka T."/>
            <person name="Terpstra P."/>
            <person name="Tognoni A."/>
            <person name="Tosato V."/>
            <person name="Uchiyama S."/>
            <person name="Vandenbol M."/>
            <person name="Vannier F."/>
            <person name="Vassarotti A."/>
            <person name="Viari A."/>
            <person name="Wambutt R."/>
            <person name="Wedler E."/>
            <person name="Wedler H."/>
            <person name="Weitzenegger T."/>
            <person name="Winters P."/>
            <person name="Wipat A."/>
            <person name="Yamamoto H."/>
            <person name="Yamane K."/>
            <person name="Yasumoto K."/>
            <person name="Yata K."/>
            <person name="Yoshida K."/>
            <person name="Yoshikawa H.-F."/>
            <person name="Zumstein E."/>
            <person name="Yoshikawa H."/>
            <person name="Danchin A."/>
        </authorList>
    </citation>
    <scope>NUCLEOTIDE SEQUENCE [LARGE SCALE GENOMIC DNA]</scope>
    <source>
        <strain>168</strain>
    </source>
</reference>
<reference key="4">
    <citation type="journal article" date="1995" name="Gene">
        <title>Analysis of a Bacillus subtilis genome fragment using a co-operative computer system prototype.</title>
        <authorList>
            <person name="Medigue C."/>
            <person name="Moszer I."/>
            <person name="Viari A."/>
            <person name="Danchin A."/>
        </authorList>
    </citation>
    <scope>IDENTIFICATION</scope>
</reference>
<sequence>MITQLYRERTAADLKNRISKVLLNGNETEIVELTIQGAVVTVLTQREEDIKHIKSVQILDDQNNVITERTTDLDVSNNRTLDFRITFEVV</sequence>
<proteinExistence type="predicted"/>
<dbReference type="EMBL" id="D32216">
    <property type="protein sequence ID" value="BAA06954.1"/>
    <property type="molecule type" value="Genomic_DNA"/>
</dbReference>
<dbReference type="EMBL" id="D84432">
    <property type="protein sequence ID" value="BAA12418.1"/>
    <property type="molecule type" value="Genomic_DNA"/>
</dbReference>
<dbReference type="EMBL" id="AL009126">
    <property type="protein sequence ID" value="CAB14537.1"/>
    <property type="molecule type" value="Genomic_DNA"/>
</dbReference>
<dbReference type="PIR" id="A69949">
    <property type="entry name" value="A69949"/>
</dbReference>
<dbReference type="RefSeq" id="NP_390473.1">
    <property type="nucleotide sequence ID" value="NC_000964.3"/>
</dbReference>
<dbReference type="RefSeq" id="WP_003229942.1">
    <property type="nucleotide sequence ID" value="NZ_OZ025638.1"/>
</dbReference>
<dbReference type="FunCoup" id="P45937">
    <property type="interactions" value="83"/>
</dbReference>
<dbReference type="STRING" id="224308.BSU25960"/>
<dbReference type="PaxDb" id="224308-BSU25960"/>
<dbReference type="EnsemblBacteria" id="CAB14537">
    <property type="protein sequence ID" value="CAB14537"/>
    <property type="gene ID" value="BSU_25960"/>
</dbReference>
<dbReference type="GeneID" id="937762"/>
<dbReference type="KEGG" id="bsu:BSU25960"/>
<dbReference type="PATRIC" id="fig|224308.179.peg.2821"/>
<dbReference type="eggNOG" id="ENOG5033EIE">
    <property type="taxonomic scope" value="Bacteria"/>
</dbReference>
<dbReference type="InParanoid" id="P45937"/>
<dbReference type="OrthoDB" id="2904244at2"/>
<dbReference type="BioCyc" id="BSUB:BSU25960-MONOMER"/>
<dbReference type="Proteomes" id="UP000001570">
    <property type="component" value="Chromosome"/>
</dbReference>
<gene>
    <name type="primary">yqcB</name>
    <name type="ordered locus">BSU25960</name>
</gene>
<name>YQCB_BACSU</name>
<keyword id="KW-1185">Reference proteome</keyword>